<comment type="function">
    <text evidence="3">Terpene synthase that converts its substrate farnesyl diphosphate (FPP) into 6 yet unidentified sesquiterpenes.</text>
</comment>
<comment type="domain">
    <text evidence="2">Contains several highly conserved motifs that are important for catalytic activity including the aspartate-rich 'DDxx(x)D/E' motif and the 'NDxxSxxxD/E' motif, both of which are involved in complexing metal ions to coordinate the binding of the isoprenyl diphosphate substrate in the active site.</text>
</comment>
<comment type="similarity">
    <text evidence="5">Belongs to the terpene synthase family.</text>
</comment>
<dbReference type="EC" id="4.2.3.-" evidence="3"/>
<dbReference type="EMBL" id="MG262468">
    <property type="protein sequence ID" value="AXN72976.1"/>
    <property type="molecule type" value="mRNA"/>
</dbReference>
<dbReference type="EMBL" id="GL871479">
    <property type="protein sequence ID" value="EGC29128.1"/>
    <property type="molecule type" value="Genomic_DNA"/>
</dbReference>
<dbReference type="RefSeq" id="XP_003294344.1">
    <property type="nucleotide sequence ID" value="XM_003294296.1"/>
</dbReference>
<dbReference type="SMR" id="F1A3V1"/>
<dbReference type="STRING" id="5786.F1A3V1"/>
<dbReference type="EnsemblProtists" id="EGC29128">
    <property type="protein sequence ID" value="EGC29128"/>
    <property type="gene ID" value="DICPUDRAFT_84822"/>
</dbReference>
<dbReference type="GeneID" id="10506499"/>
<dbReference type="KEGG" id="dpp:DICPUDRAFT_84822"/>
<dbReference type="VEuPathDB" id="AmoebaDB:DICPUDRAFT_84822"/>
<dbReference type="InParanoid" id="F1A3V1"/>
<dbReference type="OMA" id="ESAYGHI"/>
<dbReference type="OrthoDB" id="2861623at2759"/>
<dbReference type="Proteomes" id="UP000001064">
    <property type="component" value="Unassembled WGS sequence"/>
</dbReference>
<dbReference type="GO" id="GO:0046872">
    <property type="term" value="F:metal ion binding"/>
    <property type="evidence" value="ECO:0007669"/>
    <property type="project" value="UniProtKB-KW"/>
</dbReference>
<dbReference type="GO" id="GO:0010333">
    <property type="term" value="F:terpene synthase activity"/>
    <property type="evidence" value="ECO:0007669"/>
    <property type="project" value="InterPro"/>
</dbReference>
<dbReference type="GO" id="GO:0046246">
    <property type="term" value="P:terpene biosynthetic process"/>
    <property type="evidence" value="ECO:0007669"/>
    <property type="project" value="UniProtKB-ARBA"/>
</dbReference>
<dbReference type="Gene3D" id="1.10.600.10">
    <property type="entry name" value="Farnesyl Diphosphate Synthase"/>
    <property type="match status" value="1"/>
</dbReference>
<dbReference type="InterPro" id="IPR008949">
    <property type="entry name" value="Isoprenoid_synthase_dom_sf"/>
</dbReference>
<dbReference type="InterPro" id="IPR034686">
    <property type="entry name" value="Terpene_cyclase-like_2"/>
</dbReference>
<dbReference type="PANTHER" id="PTHR35201:SF4">
    <property type="entry name" value="BETA-PINACENE SYNTHASE-RELATED"/>
    <property type="match status" value="1"/>
</dbReference>
<dbReference type="PANTHER" id="PTHR35201">
    <property type="entry name" value="TERPENE SYNTHASE"/>
    <property type="match status" value="1"/>
</dbReference>
<dbReference type="Pfam" id="PF19086">
    <property type="entry name" value="Terpene_syn_C_2"/>
    <property type="match status" value="1"/>
</dbReference>
<dbReference type="SUPFAM" id="SSF48576">
    <property type="entry name" value="Terpenoid synthases"/>
    <property type="match status" value="1"/>
</dbReference>
<protein>
    <recommendedName>
        <fullName evidence="4">Terpene synthase 7</fullName>
        <ecNumber evidence="3">4.2.3.-</ecNumber>
    </recommendedName>
</protein>
<name>TPS7_DICPU</name>
<gene>
    <name evidence="4" type="primary">TPS7</name>
    <name type="ORF">DICPUDRAFT_84822</name>
</gene>
<reference key="1">
    <citation type="journal article" date="2018" name="Sci. Rep.">
        <title>Diversity and Functional Evolution of Terpene Synthases in Dictyostelid Social Amoebae.</title>
        <authorList>
            <person name="Chen X."/>
            <person name="Kollner T.G."/>
            <person name="Shaulsky G."/>
            <person name="Jia Q."/>
            <person name="Dickschat J.S."/>
            <person name="Gershenzon J."/>
            <person name="Chen F."/>
        </authorList>
    </citation>
    <scope>NUCLEOTIDE SEQUENCE [MRNA]</scope>
    <scope>FUNCTION</scope>
    <scope>CATALYTIC ACTIVITY</scope>
    <source>
        <strain>AX1</strain>
    </source>
</reference>
<reference key="2">
    <citation type="journal article" date="2011" name="Genome Biol.">
        <title>Comparative genomics of the social amoebae Dictyostelium discoideum and Dictyostelium purpureum.</title>
        <authorList>
            <consortium name="US DOE Joint Genome Institute (JGI-PGF)"/>
            <person name="Sucgang R."/>
            <person name="Kuo A."/>
            <person name="Tian X."/>
            <person name="Salerno W."/>
            <person name="Parikh A."/>
            <person name="Feasley C.L."/>
            <person name="Dalin E."/>
            <person name="Tu H."/>
            <person name="Huang E."/>
            <person name="Barry K."/>
            <person name="Lindquist E."/>
            <person name="Shapiro H."/>
            <person name="Bruce D."/>
            <person name="Schmutz J."/>
            <person name="Salamov A."/>
            <person name="Fey P."/>
            <person name="Gaudet P."/>
            <person name="Anjard C."/>
            <person name="Babu M.M."/>
            <person name="Basu S."/>
            <person name="Bushmanova Y."/>
            <person name="van der Wel H."/>
            <person name="Katoh-Kurasawa M."/>
            <person name="Dinh C."/>
            <person name="Coutinho P.M."/>
            <person name="Saito T."/>
            <person name="Elias M."/>
            <person name="Schaap P."/>
            <person name="Kay R.R."/>
            <person name="Henrissat B."/>
            <person name="Eichinger L."/>
            <person name="Rivero F."/>
            <person name="Putnam N.H."/>
            <person name="West C.M."/>
            <person name="Loomis W.F."/>
            <person name="Chisholm R.L."/>
            <person name="Shaulsky G."/>
            <person name="Strassmann J.E."/>
            <person name="Queller D.C."/>
            <person name="Kuspa A."/>
            <person name="Grigoriev I.V."/>
        </authorList>
    </citation>
    <scope>NUCLEOTIDE SEQUENCE [LARGE SCALE GENOMIC DNA]</scope>
    <source>
        <strain>QSDP1</strain>
    </source>
</reference>
<keyword id="KW-0456">Lyase</keyword>
<keyword id="KW-0479">Metal-binding</keyword>
<keyword id="KW-1185">Reference proteome</keyword>
<sequence length="329" mass="38968">MQEKSRVFKWDINDFKEKSFKKPTLNLTWDYKFNPHYDEILINENIEWLKGTKLFSNESDYEKFISLKTSYMNAYLYSHGNREVFRYINRLNEYIYIIDDLYLEDSVYGQEWVNQLFDRNSKLFKEDHGSSFLWQIFDDIRSAGNSEATDYLIKKTKEWMDSVILFNSKEVHSNYTFEEYSSYRGVEVGMIFALACTKVHLPPLCDEIENHPLYIELLGKYFNSIQVLINDIHSFNKEIKSSRLGNYVKIAAYQLGSIQSAMDHSQKICNDYIEAMEEKCLELESIFPNNKDLETHLYLIKTIIAGNYYGSKDPNYPRYNGTVCEADYK</sequence>
<feature type="chain" id="PRO_0000457024" description="Terpene synthase 7">
    <location>
        <begin position="1"/>
        <end position="329"/>
    </location>
</feature>
<feature type="short sequence motif" description="DDxx(x)D/E motif" evidence="1">
    <location>
        <begin position="99"/>
        <end position="104"/>
    </location>
</feature>
<feature type="short sequence motif" description="NDxxSxxxD/E motif" evidence="1">
    <location>
        <begin position="230"/>
        <end position="238"/>
    </location>
</feature>
<accession>F1A3V1</accession>
<proteinExistence type="evidence at protein level"/>
<evidence type="ECO:0000250" key="1">
    <source>
        <dbReference type="UniProtKB" id="Q54BE5"/>
    </source>
</evidence>
<evidence type="ECO:0000250" key="2">
    <source>
        <dbReference type="UniProtKB" id="Q55E23"/>
    </source>
</evidence>
<evidence type="ECO:0000269" key="3">
    <source>
    </source>
</evidence>
<evidence type="ECO:0000303" key="4">
    <source>
    </source>
</evidence>
<evidence type="ECO:0000305" key="5"/>
<organism>
    <name type="scientific">Dictyostelium purpureum</name>
    <name type="common">Slime mold</name>
    <dbReference type="NCBI Taxonomy" id="5786"/>
    <lineage>
        <taxon>Eukaryota</taxon>
        <taxon>Amoebozoa</taxon>
        <taxon>Evosea</taxon>
        <taxon>Eumycetozoa</taxon>
        <taxon>Dictyostelia</taxon>
        <taxon>Dictyosteliales</taxon>
        <taxon>Dictyosteliaceae</taxon>
        <taxon>Dictyostelium</taxon>
    </lineage>
</organism>